<dbReference type="EC" id="2.5.1.147" evidence="1"/>
<dbReference type="EMBL" id="CP000099">
    <property type="protein sequence ID" value="AAZ72289.1"/>
    <property type="molecule type" value="Genomic_DNA"/>
</dbReference>
<dbReference type="SMR" id="Q466A3"/>
<dbReference type="STRING" id="269797.Mbar_A3416"/>
<dbReference type="PaxDb" id="269797-Mbar_A3416"/>
<dbReference type="KEGG" id="mba:Mbar_A3416"/>
<dbReference type="eggNOG" id="arCOG00656">
    <property type="taxonomic scope" value="Archaea"/>
</dbReference>
<dbReference type="HOGENOM" id="CLU_040406_1_0_2"/>
<dbReference type="OrthoDB" id="8186at2157"/>
<dbReference type="UniPathway" id="UPA00072"/>
<dbReference type="GO" id="GO:0051539">
    <property type="term" value="F:4 iron, 4 sulfur cluster binding"/>
    <property type="evidence" value="ECO:0007669"/>
    <property type="project" value="UniProtKB-KW"/>
</dbReference>
<dbReference type="GO" id="GO:0141093">
    <property type="term" value="F:5-amino-6-(D-ribitylamino)uracil--L-tyrosine 4-hydroxyphenyl transferase activity"/>
    <property type="evidence" value="ECO:0007669"/>
    <property type="project" value="UniProtKB-EC"/>
</dbReference>
<dbReference type="GO" id="GO:0044689">
    <property type="term" value="F:7,8-didemethyl-8-hydroxy-5-deazariboflavin synthase activity"/>
    <property type="evidence" value="ECO:0007669"/>
    <property type="project" value="TreeGrafter"/>
</dbReference>
<dbReference type="GO" id="GO:0005506">
    <property type="term" value="F:iron ion binding"/>
    <property type="evidence" value="ECO:0007669"/>
    <property type="project" value="UniProtKB-UniRule"/>
</dbReference>
<dbReference type="CDD" id="cd01335">
    <property type="entry name" value="Radical_SAM"/>
    <property type="match status" value="1"/>
</dbReference>
<dbReference type="Gene3D" id="3.20.20.70">
    <property type="entry name" value="Aldolase class I"/>
    <property type="match status" value="1"/>
</dbReference>
<dbReference type="HAMAP" id="MF_01612">
    <property type="entry name" value="FO_synth_sub2"/>
    <property type="match status" value="1"/>
</dbReference>
<dbReference type="InterPro" id="IPR013785">
    <property type="entry name" value="Aldolase_TIM"/>
</dbReference>
<dbReference type="InterPro" id="IPR045567">
    <property type="entry name" value="CofH/MnqC-like_C"/>
</dbReference>
<dbReference type="InterPro" id="IPR019940">
    <property type="entry name" value="CofH_family"/>
</dbReference>
<dbReference type="InterPro" id="IPR006638">
    <property type="entry name" value="Elp3/MiaA/NifB-like_rSAM"/>
</dbReference>
<dbReference type="InterPro" id="IPR034405">
    <property type="entry name" value="F420"/>
</dbReference>
<dbReference type="InterPro" id="IPR020050">
    <property type="entry name" value="FO_synthase_su2"/>
</dbReference>
<dbReference type="InterPro" id="IPR007197">
    <property type="entry name" value="rSAM"/>
</dbReference>
<dbReference type="NCBIfam" id="TIGR00423">
    <property type="entry name" value="CofH family radical SAM protein"/>
    <property type="match status" value="1"/>
</dbReference>
<dbReference type="NCBIfam" id="TIGR03551">
    <property type="entry name" value="F420_cofH"/>
    <property type="match status" value="1"/>
</dbReference>
<dbReference type="NCBIfam" id="NF005609">
    <property type="entry name" value="PRK07360.1"/>
    <property type="match status" value="1"/>
</dbReference>
<dbReference type="PANTHER" id="PTHR43076">
    <property type="entry name" value="FO SYNTHASE (COFH)"/>
    <property type="match status" value="1"/>
</dbReference>
<dbReference type="PANTHER" id="PTHR43076:SF1">
    <property type="entry name" value="LIPOYL SYNTHASE 2"/>
    <property type="match status" value="1"/>
</dbReference>
<dbReference type="Pfam" id="PF19288">
    <property type="entry name" value="CofH_C"/>
    <property type="match status" value="1"/>
</dbReference>
<dbReference type="Pfam" id="PF04055">
    <property type="entry name" value="Radical_SAM"/>
    <property type="match status" value="1"/>
</dbReference>
<dbReference type="PIRSF" id="PIRSF004762">
    <property type="entry name" value="CHP00423"/>
    <property type="match status" value="1"/>
</dbReference>
<dbReference type="SFLD" id="SFLDF00293">
    <property type="entry name" value="((2_3_4_5-tetrahydroxypentyl)a"/>
    <property type="match status" value="1"/>
</dbReference>
<dbReference type="SFLD" id="SFLDF00343">
    <property type="entry name" value="aminofutalosine_synthase_(mqnE"/>
    <property type="match status" value="1"/>
</dbReference>
<dbReference type="SFLD" id="SFLDG01082">
    <property type="entry name" value="B12-binding_domain_containing"/>
    <property type="match status" value="1"/>
</dbReference>
<dbReference type="SFLD" id="SFLDS00029">
    <property type="entry name" value="Radical_SAM"/>
    <property type="match status" value="2"/>
</dbReference>
<dbReference type="SMART" id="SM00729">
    <property type="entry name" value="Elp3"/>
    <property type="match status" value="1"/>
</dbReference>
<dbReference type="SUPFAM" id="SSF102114">
    <property type="entry name" value="Radical SAM enzymes"/>
    <property type="match status" value="1"/>
</dbReference>
<dbReference type="PROSITE" id="PS51918">
    <property type="entry name" value="RADICAL_SAM"/>
    <property type="match status" value="1"/>
</dbReference>
<comment type="function">
    <text evidence="1">Catalyzes the radical-mediated synthesis of 5-amino-5-(4-hydroxybenzyl)-6-(D-ribitylimino)-5,6-dihydrouracil from 5-amino-6-(D-ribitylamino)uracil and L-tyrosine.</text>
</comment>
<comment type="catalytic activity">
    <reaction evidence="1">
        <text>5-amino-6-(D-ribitylamino)uracil + L-tyrosine + S-adenosyl-L-methionine = 5-amino-5-(4-hydroxybenzyl)-6-(D-ribitylimino)-5,6-dihydrouracil + 2-iminoacetate + 5'-deoxyadenosine + L-methionine + H(+)</text>
        <dbReference type="Rhea" id="RHEA:55200"/>
        <dbReference type="ChEBI" id="CHEBI:15378"/>
        <dbReference type="ChEBI" id="CHEBI:15934"/>
        <dbReference type="ChEBI" id="CHEBI:17319"/>
        <dbReference type="ChEBI" id="CHEBI:57844"/>
        <dbReference type="ChEBI" id="CHEBI:58315"/>
        <dbReference type="ChEBI" id="CHEBI:59789"/>
        <dbReference type="ChEBI" id="CHEBI:77846"/>
        <dbReference type="ChEBI" id="CHEBI:85936"/>
        <dbReference type="EC" id="2.5.1.147"/>
    </reaction>
</comment>
<comment type="cofactor">
    <cofactor evidence="1">
        <name>[4Fe-4S] cluster</name>
        <dbReference type="ChEBI" id="CHEBI:49883"/>
    </cofactor>
    <text evidence="1">Binds 1 [4Fe-4S] cluster. The cluster is coordinated with 3 cysteines and an exchangeable S-adenosyl-L-methionine.</text>
</comment>
<comment type="pathway">
    <text evidence="1">Cofactor biosynthesis; coenzyme F0 biosynthesis.</text>
</comment>
<comment type="subunit">
    <text evidence="1">Consists of two subunits, CofG and CofH.</text>
</comment>
<comment type="similarity">
    <text evidence="1">Belongs to the radical SAM superfamily. CofH family.</text>
</comment>
<protein>
    <recommendedName>
        <fullName evidence="1">5-amino-6-(D-ribitylamino)uracil--L-tyrosine 4-hydroxyphenyl transferase 1</fullName>
        <ecNumber evidence="1">2.5.1.147</ecNumber>
    </recommendedName>
    <alternativeName>
        <fullName evidence="1">FO synthase subunit 2 1</fullName>
    </alternativeName>
</protein>
<name>COFH1_METBF</name>
<reference key="1">
    <citation type="journal article" date="2006" name="J. Bacteriol.">
        <title>The Methanosarcina barkeri genome: comparative analysis with Methanosarcina acetivorans and Methanosarcina mazei reveals extensive rearrangement within methanosarcinal genomes.</title>
        <authorList>
            <person name="Maeder D.L."/>
            <person name="Anderson I."/>
            <person name="Brettin T.S."/>
            <person name="Bruce D.C."/>
            <person name="Gilna P."/>
            <person name="Han C.S."/>
            <person name="Lapidus A."/>
            <person name="Metcalf W.W."/>
            <person name="Saunders E."/>
            <person name="Tapia R."/>
            <person name="Sowers K.R."/>
        </authorList>
    </citation>
    <scope>NUCLEOTIDE SEQUENCE [LARGE SCALE GENOMIC DNA]</scope>
    <source>
        <strain>Fusaro / DSM 804</strain>
    </source>
</reference>
<proteinExistence type="inferred from homology"/>
<evidence type="ECO:0000255" key="1">
    <source>
        <dbReference type="HAMAP-Rule" id="MF_01612"/>
    </source>
</evidence>
<evidence type="ECO:0000255" key="2">
    <source>
        <dbReference type="PROSITE-ProRule" id="PRU01266"/>
    </source>
</evidence>
<accession>Q466A3</accession>
<gene>
    <name evidence="1" type="primary">cofH1</name>
    <name type="ordered locus">Mbar_A3416</name>
</gene>
<sequence length="376" mass="41612">MNNRIPEDLIERAYQGKSTKEDGLLLLEVPPFELFRFADELRSLTAGDTVTYVVNRNINFTSRCVGTCGFCAFRTNDGKVLSIEEIMEKVREAEKAKATEVCIQGGLLPDVGLDFYQEIAESIKAEFPEMHIHAFSPMEVYHASHISGIKVSEALSKLKRSGLDTMPGTAAEILSDRVRKIICPSKLRTAEWIEVVTQAHAAGIPTTATMMYGHVETPEERIEHILTIREIQKETGGITEFVPLPFMPYNNPVGEKIIREGRYATPGLDDLKIYAISRILLHGHVDNIQASWVKLGKKLSQFALQCGANDLGGTLMEESISRLAGAPNGESISVEELEWMIYGAGRVPKERTTLYKGVRELASRNPGRITGCGASE</sequence>
<keyword id="KW-0004">4Fe-4S</keyword>
<keyword id="KW-0408">Iron</keyword>
<keyword id="KW-0411">Iron-sulfur</keyword>
<keyword id="KW-0479">Metal-binding</keyword>
<keyword id="KW-0949">S-adenosyl-L-methionine</keyword>
<keyword id="KW-0808">Transferase</keyword>
<feature type="chain" id="PRO_0000323517" description="5-amino-6-(D-ribitylamino)uracil--L-tyrosine 4-hydroxyphenyl transferase 1">
    <location>
        <begin position="1"/>
        <end position="376"/>
    </location>
</feature>
<feature type="domain" description="Radical SAM core" evidence="2">
    <location>
        <begin position="50"/>
        <end position="284"/>
    </location>
</feature>
<feature type="binding site" evidence="1">
    <location>
        <position position="64"/>
    </location>
    <ligand>
        <name>[4Fe-4S] cluster</name>
        <dbReference type="ChEBI" id="CHEBI:49883"/>
        <note>4Fe-4S-S-AdoMet</note>
    </ligand>
</feature>
<feature type="binding site" evidence="1">
    <location>
        <position position="68"/>
    </location>
    <ligand>
        <name>[4Fe-4S] cluster</name>
        <dbReference type="ChEBI" id="CHEBI:49883"/>
        <note>4Fe-4S-S-AdoMet</note>
    </ligand>
</feature>
<feature type="binding site" evidence="1">
    <location>
        <position position="71"/>
    </location>
    <ligand>
        <name>[4Fe-4S] cluster</name>
        <dbReference type="ChEBI" id="CHEBI:49883"/>
        <note>4Fe-4S-S-AdoMet</note>
    </ligand>
</feature>
<organism>
    <name type="scientific">Methanosarcina barkeri (strain Fusaro / DSM 804)</name>
    <dbReference type="NCBI Taxonomy" id="269797"/>
    <lineage>
        <taxon>Archaea</taxon>
        <taxon>Methanobacteriati</taxon>
        <taxon>Methanobacteriota</taxon>
        <taxon>Stenosarchaea group</taxon>
        <taxon>Methanomicrobia</taxon>
        <taxon>Methanosarcinales</taxon>
        <taxon>Methanosarcinaceae</taxon>
        <taxon>Methanosarcina</taxon>
    </lineage>
</organism>